<accession>B7LCF6</accession>
<evidence type="ECO:0000255" key="1">
    <source>
        <dbReference type="HAMAP-Rule" id="MF_01588"/>
    </source>
</evidence>
<dbReference type="EC" id="6.5.1.2" evidence="1"/>
<dbReference type="EMBL" id="CU928145">
    <property type="protein sequence ID" value="CAU98567.1"/>
    <property type="molecule type" value="Genomic_DNA"/>
</dbReference>
<dbReference type="RefSeq" id="WP_000443665.1">
    <property type="nucleotide sequence ID" value="NC_011748.1"/>
</dbReference>
<dbReference type="SMR" id="B7LCF6"/>
<dbReference type="GeneID" id="75204318"/>
<dbReference type="KEGG" id="eck:EC55989_2701"/>
<dbReference type="HOGENOM" id="CLU_007764_2_1_6"/>
<dbReference type="Proteomes" id="UP000000746">
    <property type="component" value="Chromosome"/>
</dbReference>
<dbReference type="GO" id="GO:0005829">
    <property type="term" value="C:cytosol"/>
    <property type="evidence" value="ECO:0007669"/>
    <property type="project" value="TreeGrafter"/>
</dbReference>
<dbReference type="GO" id="GO:0003677">
    <property type="term" value="F:DNA binding"/>
    <property type="evidence" value="ECO:0007669"/>
    <property type="project" value="InterPro"/>
</dbReference>
<dbReference type="GO" id="GO:0003911">
    <property type="term" value="F:DNA ligase (NAD+) activity"/>
    <property type="evidence" value="ECO:0007669"/>
    <property type="project" value="UniProtKB-UniRule"/>
</dbReference>
<dbReference type="GO" id="GO:0046872">
    <property type="term" value="F:metal ion binding"/>
    <property type="evidence" value="ECO:0007669"/>
    <property type="project" value="UniProtKB-KW"/>
</dbReference>
<dbReference type="GO" id="GO:0006281">
    <property type="term" value="P:DNA repair"/>
    <property type="evidence" value="ECO:0007669"/>
    <property type="project" value="UniProtKB-KW"/>
</dbReference>
<dbReference type="GO" id="GO:0006260">
    <property type="term" value="P:DNA replication"/>
    <property type="evidence" value="ECO:0007669"/>
    <property type="project" value="UniProtKB-KW"/>
</dbReference>
<dbReference type="CDD" id="cd17748">
    <property type="entry name" value="BRCT_DNA_ligase_like"/>
    <property type="match status" value="1"/>
</dbReference>
<dbReference type="CDD" id="cd00114">
    <property type="entry name" value="LIGANc"/>
    <property type="match status" value="1"/>
</dbReference>
<dbReference type="FunFam" id="1.10.150.20:FF:000006">
    <property type="entry name" value="DNA ligase"/>
    <property type="match status" value="1"/>
</dbReference>
<dbReference type="FunFam" id="1.10.150.20:FF:000007">
    <property type="entry name" value="DNA ligase"/>
    <property type="match status" value="1"/>
</dbReference>
<dbReference type="FunFam" id="1.10.287.610:FF:000002">
    <property type="entry name" value="DNA ligase"/>
    <property type="match status" value="1"/>
</dbReference>
<dbReference type="FunFam" id="2.40.50.140:FF:000012">
    <property type="entry name" value="DNA ligase"/>
    <property type="match status" value="1"/>
</dbReference>
<dbReference type="FunFam" id="3.30.470.30:FF:000001">
    <property type="entry name" value="DNA ligase"/>
    <property type="match status" value="1"/>
</dbReference>
<dbReference type="FunFam" id="3.40.50.10190:FF:000004">
    <property type="entry name" value="DNA ligase"/>
    <property type="match status" value="1"/>
</dbReference>
<dbReference type="FunFam" id="6.20.10.30:FF:000001">
    <property type="entry name" value="DNA ligase"/>
    <property type="match status" value="1"/>
</dbReference>
<dbReference type="Gene3D" id="6.20.10.30">
    <property type="match status" value="1"/>
</dbReference>
<dbReference type="Gene3D" id="1.10.150.20">
    <property type="entry name" value="5' to 3' exonuclease, C-terminal subdomain"/>
    <property type="match status" value="2"/>
</dbReference>
<dbReference type="Gene3D" id="3.40.50.10190">
    <property type="entry name" value="BRCT domain"/>
    <property type="match status" value="1"/>
</dbReference>
<dbReference type="Gene3D" id="3.30.470.30">
    <property type="entry name" value="DNA ligase/mRNA capping enzyme"/>
    <property type="match status" value="1"/>
</dbReference>
<dbReference type="Gene3D" id="1.10.287.610">
    <property type="entry name" value="Helix hairpin bin"/>
    <property type="match status" value="1"/>
</dbReference>
<dbReference type="Gene3D" id="2.40.50.140">
    <property type="entry name" value="Nucleic acid-binding proteins"/>
    <property type="match status" value="1"/>
</dbReference>
<dbReference type="HAMAP" id="MF_01588">
    <property type="entry name" value="DNA_ligase_A"/>
    <property type="match status" value="1"/>
</dbReference>
<dbReference type="InterPro" id="IPR001357">
    <property type="entry name" value="BRCT_dom"/>
</dbReference>
<dbReference type="InterPro" id="IPR036420">
    <property type="entry name" value="BRCT_dom_sf"/>
</dbReference>
<dbReference type="InterPro" id="IPR041663">
    <property type="entry name" value="DisA/LigA_HHH"/>
</dbReference>
<dbReference type="InterPro" id="IPR001679">
    <property type="entry name" value="DNA_ligase"/>
</dbReference>
<dbReference type="InterPro" id="IPR018239">
    <property type="entry name" value="DNA_ligase_AS"/>
</dbReference>
<dbReference type="InterPro" id="IPR033136">
    <property type="entry name" value="DNA_ligase_CS"/>
</dbReference>
<dbReference type="InterPro" id="IPR013839">
    <property type="entry name" value="DNAligase_adenylation"/>
</dbReference>
<dbReference type="InterPro" id="IPR013840">
    <property type="entry name" value="DNAligase_N"/>
</dbReference>
<dbReference type="InterPro" id="IPR003583">
    <property type="entry name" value="Hlx-hairpin-Hlx_DNA-bd_motif"/>
</dbReference>
<dbReference type="InterPro" id="IPR012340">
    <property type="entry name" value="NA-bd_OB-fold"/>
</dbReference>
<dbReference type="InterPro" id="IPR004150">
    <property type="entry name" value="NAD_DNA_ligase_OB"/>
</dbReference>
<dbReference type="InterPro" id="IPR010994">
    <property type="entry name" value="RuvA_2-like"/>
</dbReference>
<dbReference type="InterPro" id="IPR004149">
    <property type="entry name" value="Znf_DNAligase_C4"/>
</dbReference>
<dbReference type="NCBIfam" id="TIGR00575">
    <property type="entry name" value="dnlj"/>
    <property type="match status" value="1"/>
</dbReference>
<dbReference type="NCBIfam" id="NF005932">
    <property type="entry name" value="PRK07956.1"/>
    <property type="match status" value="1"/>
</dbReference>
<dbReference type="PANTHER" id="PTHR23389">
    <property type="entry name" value="CHROMOSOME TRANSMISSION FIDELITY FACTOR 18"/>
    <property type="match status" value="1"/>
</dbReference>
<dbReference type="PANTHER" id="PTHR23389:SF9">
    <property type="entry name" value="DNA LIGASE"/>
    <property type="match status" value="1"/>
</dbReference>
<dbReference type="Pfam" id="PF00533">
    <property type="entry name" value="BRCT"/>
    <property type="match status" value="1"/>
</dbReference>
<dbReference type="Pfam" id="PF01653">
    <property type="entry name" value="DNA_ligase_aden"/>
    <property type="match status" value="1"/>
</dbReference>
<dbReference type="Pfam" id="PF03120">
    <property type="entry name" value="DNA_ligase_OB"/>
    <property type="match status" value="1"/>
</dbReference>
<dbReference type="Pfam" id="PF03119">
    <property type="entry name" value="DNA_ligase_ZBD"/>
    <property type="match status" value="1"/>
</dbReference>
<dbReference type="Pfam" id="PF12826">
    <property type="entry name" value="HHH_2"/>
    <property type="match status" value="1"/>
</dbReference>
<dbReference type="Pfam" id="PF14520">
    <property type="entry name" value="HHH_5"/>
    <property type="match status" value="1"/>
</dbReference>
<dbReference type="Pfam" id="PF22745">
    <property type="entry name" value="Nlig-Ia"/>
    <property type="match status" value="1"/>
</dbReference>
<dbReference type="PIRSF" id="PIRSF001604">
    <property type="entry name" value="LigA"/>
    <property type="match status" value="1"/>
</dbReference>
<dbReference type="SMART" id="SM00292">
    <property type="entry name" value="BRCT"/>
    <property type="match status" value="1"/>
</dbReference>
<dbReference type="SMART" id="SM00278">
    <property type="entry name" value="HhH1"/>
    <property type="match status" value="4"/>
</dbReference>
<dbReference type="SMART" id="SM00532">
    <property type="entry name" value="LIGANc"/>
    <property type="match status" value="1"/>
</dbReference>
<dbReference type="SUPFAM" id="SSF52113">
    <property type="entry name" value="BRCT domain"/>
    <property type="match status" value="1"/>
</dbReference>
<dbReference type="SUPFAM" id="SSF56091">
    <property type="entry name" value="DNA ligase/mRNA capping enzyme, catalytic domain"/>
    <property type="match status" value="1"/>
</dbReference>
<dbReference type="SUPFAM" id="SSF50249">
    <property type="entry name" value="Nucleic acid-binding proteins"/>
    <property type="match status" value="1"/>
</dbReference>
<dbReference type="SUPFAM" id="SSF47781">
    <property type="entry name" value="RuvA domain 2-like"/>
    <property type="match status" value="1"/>
</dbReference>
<dbReference type="PROSITE" id="PS50172">
    <property type="entry name" value="BRCT"/>
    <property type="match status" value="1"/>
</dbReference>
<dbReference type="PROSITE" id="PS01055">
    <property type="entry name" value="DNA_LIGASE_N1"/>
    <property type="match status" value="1"/>
</dbReference>
<dbReference type="PROSITE" id="PS01056">
    <property type="entry name" value="DNA_LIGASE_N2"/>
    <property type="match status" value="1"/>
</dbReference>
<comment type="function">
    <text evidence="1">DNA ligase that catalyzes the formation of phosphodiester linkages between 5'-phosphoryl and 3'-hydroxyl groups in double-stranded DNA using NAD as a coenzyme and as the energy source for the reaction. It is essential for DNA replication and repair of damaged DNA.</text>
</comment>
<comment type="catalytic activity">
    <reaction evidence="1">
        <text>NAD(+) + (deoxyribonucleotide)n-3'-hydroxyl + 5'-phospho-(deoxyribonucleotide)m = (deoxyribonucleotide)n+m + AMP + beta-nicotinamide D-nucleotide.</text>
        <dbReference type="EC" id="6.5.1.2"/>
    </reaction>
</comment>
<comment type="cofactor">
    <cofactor evidence="1">
        <name>Mg(2+)</name>
        <dbReference type="ChEBI" id="CHEBI:18420"/>
    </cofactor>
    <cofactor evidence="1">
        <name>Mn(2+)</name>
        <dbReference type="ChEBI" id="CHEBI:29035"/>
    </cofactor>
</comment>
<comment type="similarity">
    <text evidence="1">Belongs to the NAD-dependent DNA ligase family. LigA subfamily.</text>
</comment>
<proteinExistence type="inferred from homology"/>
<name>DNLJ_ECO55</name>
<keyword id="KW-0227">DNA damage</keyword>
<keyword id="KW-0234">DNA repair</keyword>
<keyword id="KW-0235">DNA replication</keyword>
<keyword id="KW-0436">Ligase</keyword>
<keyword id="KW-0460">Magnesium</keyword>
<keyword id="KW-0464">Manganese</keyword>
<keyword id="KW-0479">Metal-binding</keyword>
<keyword id="KW-0520">NAD</keyword>
<keyword id="KW-1185">Reference proteome</keyword>
<keyword id="KW-0862">Zinc</keyword>
<sequence length="671" mass="73664">MESIEQQLTELRTTLRHHEYLYHVMDAPEIPDAEYDRLMRELRELETKHPELITPDSPTQRVGAAPLAAFSQIRHEVPMLSLDNVFDEESFLAFNKRVQDRLKNNEKVTWCCELKLDGLAVSILYENGVLVSAATRGDGTTGEDITSNVRTIRAIPLKLHGENIPARLEVRGEVFLPQAGFEKINEDARRTGGKVFANPRNAAAGSLRQLDPRITAKRPLTFFCYGVGVLEGGELPDTHLGRLLQFKKWGLPVSDRVTLCESAEEVLAFYHKVEEDRPTLGFDIDGVVIKVNSLEQQEQLGFVARAPRWAVAFKFPAQEQMTFVRDVEFQVGRTGAITPVARLEPVHVAGVLVSNATLHNADEIERLGLRIGDKVVIRRAGDVIPQVVNVVLSERPEDTREVVFPTHCPVCGSDVERVEGEAVARCTGGLICGAQRKESLKHFVSRRAMDVDGMGDKIIDQLVEKEYVHTPADLFKLTAGKLTGLERMGPKSAQNVVNALEKAKETTFARFLYALGIREVGEATAAGLAAYFGTLEALEAASIEELQKVPDVGIVVASHVHNFFAEESNRNVISELLAEGVHWPAPIVINAEEIDSPFAGKTVVLTGSLSQMSRDDAKARLVELGAKVAGSVSKKTDLVIAGEAAGSKLAKAQELGIEVIDEAEMLRLLGS</sequence>
<feature type="chain" id="PRO_0000380370" description="DNA ligase">
    <location>
        <begin position="1"/>
        <end position="671"/>
    </location>
</feature>
<feature type="domain" description="BRCT" evidence="1">
    <location>
        <begin position="593"/>
        <end position="671"/>
    </location>
</feature>
<feature type="active site" description="N6-AMP-lysine intermediate" evidence="1">
    <location>
        <position position="115"/>
    </location>
</feature>
<feature type="binding site" evidence="1">
    <location>
        <begin position="32"/>
        <end position="36"/>
    </location>
    <ligand>
        <name>NAD(+)</name>
        <dbReference type="ChEBI" id="CHEBI:57540"/>
    </ligand>
</feature>
<feature type="binding site" evidence="1">
    <location>
        <begin position="81"/>
        <end position="82"/>
    </location>
    <ligand>
        <name>NAD(+)</name>
        <dbReference type="ChEBI" id="CHEBI:57540"/>
    </ligand>
</feature>
<feature type="binding site" evidence="1">
    <location>
        <position position="113"/>
    </location>
    <ligand>
        <name>NAD(+)</name>
        <dbReference type="ChEBI" id="CHEBI:57540"/>
    </ligand>
</feature>
<feature type="binding site" evidence="1">
    <location>
        <position position="136"/>
    </location>
    <ligand>
        <name>NAD(+)</name>
        <dbReference type="ChEBI" id="CHEBI:57540"/>
    </ligand>
</feature>
<feature type="binding site" evidence="1">
    <location>
        <position position="173"/>
    </location>
    <ligand>
        <name>NAD(+)</name>
        <dbReference type="ChEBI" id="CHEBI:57540"/>
    </ligand>
</feature>
<feature type="binding site" evidence="1">
    <location>
        <position position="290"/>
    </location>
    <ligand>
        <name>NAD(+)</name>
        <dbReference type="ChEBI" id="CHEBI:57540"/>
    </ligand>
</feature>
<feature type="binding site" evidence="1">
    <location>
        <position position="314"/>
    </location>
    <ligand>
        <name>NAD(+)</name>
        <dbReference type="ChEBI" id="CHEBI:57540"/>
    </ligand>
</feature>
<feature type="binding site" evidence="1">
    <location>
        <position position="408"/>
    </location>
    <ligand>
        <name>Zn(2+)</name>
        <dbReference type="ChEBI" id="CHEBI:29105"/>
    </ligand>
</feature>
<feature type="binding site" evidence="1">
    <location>
        <position position="411"/>
    </location>
    <ligand>
        <name>Zn(2+)</name>
        <dbReference type="ChEBI" id="CHEBI:29105"/>
    </ligand>
</feature>
<feature type="binding site" evidence="1">
    <location>
        <position position="426"/>
    </location>
    <ligand>
        <name>Zn(2+)</name>
        <dbReference type="ChEBI" id="CHEBI:29105"/>
    </ligand>
</feature>
<feature type="binding site" evidence="1">
    <location>
        <position position="432"/>
    </location>
    <ligand>
        <name>Zn(2+)</name>
        <dbReference type="ChEBI" id="CHEBI:29105"/>
    </ligand>
</feature>
<protein>
    <recommendedName>
        <fullName evidence="1">DNA ligase</fullName>
        <ecNumber evidence="1">6.5.1.2</ecNumber>
    </recommendedName>
    <alternativeName>
        <fullName evidence="1">Polydeoxyribonucleotide synthase [NAD(+)]</fullName>
    </alternativeName>
</protein>
<organism>
    <name type="scientific">Escherichia coli (strain 55989 / EAEC)</name>
    <dbReference type="NCBI Taxonomy" id="585055"/>
    <lineage>
        <taxon>Bacteria</taxon>
        <taxon>Pseudomonadati</taxon>
        <taxon>Pseudomonadota</taxon>
        <taxon>Gammaproteobacteria</taxon>
        <taxon>Enterobacterales</taxon>
        <taxon>Enterobacteriaceae</taxon>
        <taxon>Escherichia</taxon>
    </lineage>
</organism>
<reference key="1">
    <citation type="journal article" date="2009" name="PLoS Genet.">
        <title>Organised genome dynamics in the Escherichia coli species results in highly diverse adaptive paths.</title>
        <authorList>
            <person name="Touchon M."/>
            <person name="Hoede C."/>
            <person name="Tenaillon O."/>
            <person name="Barbe V."/>
            <person name="Baeriswyl S."/>
            <person name="Bidet P."/>
            <person name="Bingen E."/>
            <person name="Bonacorsi S."/>
            <person name="Bouchier C."/>
            <person name="Bouvet O."/>
            <person name="Calteau A."/>
            <person name="Chiapello H."/>
            <person name="Clermont O."/>
            <person name="Cruveiller S."/>
            <person name="Danchin A."/>
            <person name="Diard M."/>
            <person name="Dossat C."/>
            <person name="Karoui M.E."/>
            <person name="Frapy E."/>
            <person name="Garry L."/>
            <person name="Ghigo J.M."/>
            <person name="Gilles A.M."/>
            <person name="Johnson J."/>
            <person name="Le Bouguenec C."/>
            <person name="Lescat M."/>
            <person name="Mangenot S."/>
            <person name="Martinez-Jehanne V."/>
            <person name="Matic I."/>
            <person name="Nassif X."/>
            <person name="Oztas S."/>
            <person name="Petit M.A."/>
            <person name="Pichon C."/>
            <person name="Rouy Z."/>
            <person name="Ruf C.S."/>
            <person name="Schneider D."/>
            <person name="Tourret J."/>
            <person name="Vacherie B."/>
            <person name="Vallenet D."/>
            <person name="Medigue C."/>
            <person name="Rocha E.P.C."/>
            <person name="Denamur E."/>
        </authorList>
    </citation>
    <scope>NUCLEOTIDE SEQUENCE [LARGE SCALE GENOMIC DNA]</scope>
    <source>
        <strain>55989 / EAEC</strain>
    </source>
</reference>
<gene>
    <name evidence="1" type="primary">ligA</name>
    <name type="ordered locus">EC55989_2701</name>
</gene>